<comment type="function">
    <text evidence="1">Binds the lower part of the 30S subunit head. Binds mRNA in the 70S ribosome, positioning it for translation.</text>
</comment>
<comment type="subunit">
    <text evidence="1">Part of the 30S ribosomal subunit. Forms a tight complex with proteins S10 and S14.</text>
</comment>
<comment type="similarity">
    <text evidence="1">Belongs to the universal ribosomal protein uS3 family.</text>
</comment>
<accession>A8AQL0</accession>
<reference key="1">
    <citation type="submission" date="2007-08" db="EMBL/GenBank/DDBJ databases">
        <authorList>
            <consortium name="The Citrobacter koseri Genome Sequencing Project"/>
            <person name="McClelland M."/>
            <person name="Sanderson E.K."/>
            <person name="Porwollik S."/>
            <person name="Spieth J."/>
            <person name="Clifton W.S."/>
            <person name="Latreille P."/>
            <person name="Courtney L."/>
            <person name="Wang C."/>
            <person name="Pepin K."/>
            <person name="Bhonagiri V."/>
            <person name="Nash W."/>
            <person name="Johnson M."/>
            <person name="Thiruvilangam P."/>
            <person name="Wilson R."/>
        </authorList>
    </citation>
    <scope>NUCLEOTIDE SEQUENCE [LARGE SCALE GENOMIC DNA]</scope>
    <source>
        <strain>ATCC BAA-895 / CDC 4225-83 / SGSC4696</strain>
    </source>
</reference>
<keyword id="KW-1185">Reference proteome</keyword>
<keyword id="KW-0687">Ribonucleoprotein</keyword>
<keyword id="KW-0689">Ribosomal protein</keyword>
<keyword id="KW-0694">RNA-binding</keyword>
<keyword id="KW-0699">rRNA-binding</keyword>
<evidence type="ECO:0000255" key="1">
    <source>
        <dbReference type="HAMAP-Rule" id="MF_01309"/>
    </source>
</evidence>
<evidence type="ECO:0000305" key="2"/>
<name>RS3_CITK8</name>
<protein>
    <recommendedName>
        <fullName evidence="1">Small ribosomal subunit protein uS3</fullName>
    </recommendedName>
    <alternativeName>
        <fullName evidence="2">30S ribosomal protein S3</fullName>
    </alternativeName>
</protein>
<organism>
    <name type="scientific">Citrobacter koseri (strain ATCC BAA-895 / CDC 4225-83 / SGSC4696)</name>
    <dbReference type="NCBI Taxonomy" id="290338"/>
    <lineage>
        <taxon>Bacteria</taxon>
        <taxon>Pseudomonadati</taxon>
        <taxon>Pseudomonadota</taxon>
        <taxon>Gammaproteobacteria</taxon>
        <taxon>Enterobacterales</taxon>
        <taxon>Enterobacteriaceae</taxon>
        <taxon>Citrobacter</taxon>
    </lineage>
</organism>
<sequence>MGQKVHPNGIRLGIVKPWNSTWFANTKEFADNLDSDFKVRQYLTKELAKASVSRIVIERPAKSIRVTIHTARPGIVIGKKGEDVEKLRKVVADIAGVPAQINIAEVRKPELDAKLVADSITSQLERRVMFRRAMKRAVQNAMRLGAKGIKVEVSGRLGGAEIARTEWYREGRVPLHTLRADIDYNTSEAHTTYGVIGVKVWIFKGEILGGMAAVEQPEKPAAQPKKQQRKGRK</sequence>
<proteinExistence type="inferred from homology"/>
<gene>
    <name evidence="1" type="primary">rpsC</name>
    <name type="ordered locus">CKO_04729</name>
</gene>
<feature type="chain" id="PRO_1000086104" description="Small ribosomal subunit protein uS3">
    <location>
        <begin position="1"/>
        <end position="233"/>
    </location>
</feature>
<feature type="domain" description="KH type-2" evidence="1">
    <location>
        <begin position="39"/>
        <end position="107"/>
    </location>
</feature>
<dbReference type="EMBL" id="CP000822">
    <property type="protein sequence ID" value="ABV15774.1"/>
    <property type="molecule type" value="Genomic_DNA"/>
</dbReference>
<dbReference type="RefSeq" id="WP_000529945.1">
    <property type="nucleotide sequence ID" value="NC_009792.1"/>
</dbReference>
<dbReference type="SMR" id="A8AQL0"/>
<dbReference type="STRING" id="290338.CKO_04729"/>
<dbReference type="GeneID" id="97603663"/>
<dbReference type="KEGG" id="cko:CKO_04729"/>
<dbReference type="HOGENOM" id="CLU_058591_0_2_6"/>
<dbReference type="OrthoDB" id="9806396at2"/>
<dbReference type="Proteomes" id="UP000008148">
    <property type="component" value="Chromosome"/>
</dbReference>
<dbReference type="GO" id="GO:0022627">
    <property type="term" value="C:cytosolic small ribosomal subunit"/>
    <property type="evidence" value="ECO:0007669"/>
    <property type="project" value="TreeGrafter"/>
</dbReference>
<dbReference type="GO" id="GO:0003729">
    <property type="term" value="F:mRNA binding"/>
    <property type="evidence" value="ECO:0007669"/>
    <property type="project" value="UniProtKB-UniRule"/>
</dbReference>
<dbReference type="GO" id="GO:0019843">
    <property type="term" value="F:rRNA binding"/>
    <property type="evidence" value="ECO:0007669"/>
    <property type="project" value="UniProtKB-UniRule"/>
</dbReference>
<dbReference type="GO" id="GO:0003735">
    <property type="term" value="F:structural constituent of ribosome"/>
    <property type="evidence" value="ECO:0007669"/>
    <property type="project" value="InterPro"/>
</dbReference>
<dbReference type="GO" id="GO:0006412">
    <property type="term" value="P:translation"/>
    <property type="evidence" value="ECO:0007669"/>
    <property type="project" value="UniProtKB-UniRule"/>
</dbReference>
<dbReference type="CDD" id="cd02412">
    <property type="entry name" value="KH-II_30S_S3"/>
    <property type="match status" value="1"/>
</dbReference>
<dbReference type="FunFam" id="3.30.1140.32:FF:000001">
    <property type="entry name" value="30S ribosomal protein S3"/>
    <property type="match status" value="1"/>
</dbReference>
<dbReference type="FunFam" id="3.30.300.20:FF:000001">
    <property type="entry name" value="30S ribosomal protein S3"/>
    <property type="match status" value="1"/>
</dbReference>
<dbReference type="Gene3D" id="3.30.300.20">
    <property type="match status" value="1"/>
</dbReference>
<dbReference type="Gene3D" id="3.30.1140.32">
    <property type="entry name" value="Ribosomal protein S3, C-terminal domain"/>
    <property type="match status" value="1"/>
</dbReference>
<dbReference type="HAMAP" id="MF_01309_B">
    <property type="entry name" value="Ribosomal_uS3_B"/>
    <property type="match status" value="1"/>
</dbReference>
<dbReference type="InterPro" id="IPR004087">
    <property type="entry name" value="KH_dom"/>
</dbReference>
<dbReference type="InterPro" id="IPR015946">
    <property type="entry name" value="KH_dom-like_a/b"/>
</dbReference>
<dbReference type="InterPro" id="IPR004044">
    <property type="entry name" value="KH_dom_type_2"/>
</dbReference>
<dbReference type="InterPro" id="IPR009019">
    <property type="entry name" value="KH_sf_prok-type"/>
</dbReference>
<dbReference type="InterPro" id="IPR036419">
    <property type="entry name" value="Ribosomal_S3_C_sf"/>
</dbReference>
<dbReference type="InterPro" id="IPR005704">
    <property type="entry name" value="Ribosomal_uS3_bac-typ"/>
</dbReference>
<dbReference type="InterPro" id="IPR001351">
    <property type="entry name" value="Ribosomal_uS3_C"/>
</dbReference>
<dbReference type="InterPro" id="IPR018280">
    <property type="entry name" value="Ribosomal_uS3_CS"/>
</dbReference>
<dbReference type="NCBIfam" id="TIGR01009">
    <property type="entry name" value="rpsC_bact"/>
    <property type="match status" value="1"/>
</dbReference>
<dbReference type="PANTHER" id="PTHR11760">
    <property type="entry name" value="30S/40S RIBOSOMAL PROTEIN S3"/>
    <property type="match status" value="1"/>
</dbReference>
<dbReference type="PANTHER" id="PTHR11760:SF19">
    <property type="entry name" value="SMALL RIBOSOMAL SUBUNIT PROTEIN US3C"/>
    <property type="match status" value="1"/>
</dbReference>
<dbReference type="Pfam" id="PF07650">
    <property type="entry name" value="KH_2"/>
    <property type="match status" value="1"/>
</dbReference>
<dbReference type="Pfam" id="PF00189">
    <property type="entry name" value="Ribosomal_S3_C"/>
    <property type="match status" value="1"/>
</dbReference>
<dbReference type="SMART" id="SM00322">
    <property type="entry name" value="KH"/>
    <property type="match status" value="1"/>
</dbReference>
<dbReference type="SUPFAM" id="SSF54814">
    <property type="entry name" value="Prokaryotic type KH domain (KH-domain type II)"/>
    <property type="match status" value="1"/>
</dbReference>
<dbReference type="SUPFAM" id="SSF54821">
    <property type="entry name" value="Ribosomal protein S3 C-terminal domain"/>
    <property type="match status" value="1"/>
</dbReference>
<dbReference type="PROSITE" id="PS50823">
    <property type="entry name" value="KH_TYPE_2"/>
    <property type="match status" value="1"/>
</dbReference>
<dbReference type="PROSITE" id="PS00548">
    <property type="entry name" value="RIBOSOMAL_S3"/>
    <property type="match status" value="1"/>
</dbReference>